<dbReference type="SMR" id="P0C5F1"/>
<dbReference type="GO" id="GO:0005576">
    <property type="term" value="C:extracellular region"/>
    <property type="evidence" value="ECO:0007669"/>
    <property type="project" value="UniProtKB-SubCell"/>
</dbReference>
<dbReference type="GO" id="GO:0005246">
    <property type="term" value="F:calcium channel regulator activity"/>
    <property type="evidence" value="ECO:0007669"/>
    <property type="project" value="UniProtKB-KW"/>
</dbReference>
<dbReference type="GO" id="GO:0019871">
    <property type="term" value="F:sodium channel inhibitor activity"/>
    <property type="evidence" value="ECO:0007669"/>
    <property type="project" value="InterPro"/>
</dbReference>
<dbReference type="GO" id="GO:0090729">
    <property type="term" value="F:toxin activity"/>
    <property type="evidence" value="ECO:0007669"/>
    <property type="project" value="UniProtKB-KW"/>
</dbReference>
<dbReference type="GO" id="GO:0006952">
    <property type="term" value="P:defense response"/>
    <property type="evidence" value="ECO:0007669"/>
    <property type="project" value="InterPro"/>
</dbReference>
<dbReference type="CDD" id="cd23106">
    <property type="entry name" value="neurotoxins_LC_scorpion"/>
    <property type="match status" value="1"/>
</dbReference>
<dbReference type="Gene3D" id="3.30.30.10">
    <property type="entry name" value="Knottin, scorpion toxin-like"/>
    <property type="match status" value="1"/>
</dbReference>
<dbReference type="InterPro" id="IPR044062">
    <property type="entry name" value="LCN-type_CS_alpha_beta_dom"/>
</dbReference>
<dbReference type="InterPro" id="IPR003614">
    <property type="entry name" value="Scorpion_toxin-like"/>
</dbReference>
<dbReference type="InterPro" id="IPR036574">
    <property type="entry name" value="Scorpion_toxin-like_sf"/>
</dbReference>
<dbReference type="InterPro" id="IPR018218">
    <property type="entry name" value="Scorpion_toxinL"/>
</dbReference>
<dbReference type="InterPro" id="IPR002061">
    <property type="entry name" value="Scorpion_toxinL/defensin"/>
</dbReference>
<dbReference type="Pfam" id="PF00537">
    <property type="entry name" value="Toxin_3"/>
    <property type="match status" value="1"/>
</dbReference>
<dbReference type="PRINTS" id="PR00285">
    <property type="entry name" value="SCORPNTOXIN"/>
</dbReference>
<dbReference type="SMART" id="SM00505">
    <property type="entry name" value="Knot1"/>
    <property type="match status" value="1"/>
</dbReference>
<dbReference type="SUPFAM" id="SSF57095">
    <property type="entry name" value="Scorpion toxin-like"/>
    <property type="match status" value="1"/>
</dbReference>
<dbReference type="PROSITE" id="PS51863">
    <property type="entry name" value="LCN_CSAB"/>
    <property type="match status" value="1"/>
</dbReference>
<name>KURT2_PARGR</name>
<feature type="chain" id="PRO_0000305105" description="Kurtoxin-like II">
    <location>
        <begin position="1"/>
        <end position="63"/>
    </location>
</feature>
<feature type="domain" description="LCN-type CS-alpha/beta" evidence="3">
    <location>
        <begin position="2"/>
        <end position="62"/>
    </location>
</feature>
<feature type="disulfide bond" evidence="3">
    <location>
        <begin position="12"/>
        <end position="61"/>
    </location>
</feature>
<feature type="disulfide bond" evidence="3">
    <location>
        <begin position="16"/>
        <end position="37"/>
    </location>
</feature>
<feature type="disulfide bond" evidence="3">
    <location>
        <begin position="23"/>
        <end position="44"/>
    </location>
</feature>
<feature type="disulfide bond" evidence="3">
    <location>
        <begin position="27"/>
        <end position="46"/>
    </location>
</feature>
<accession>P0C5F1</accession>
<keyword id="KW-0108">Calcium channel impairing toxin</keyword>
<keyword id="KW-0123">Cardiotoxin</keyword>
<keyword id="KW-0903">Direct protein sequencing</keyword>
<keyword id="KW-1015">Disulfide bond</keyword>
<keyword id="KW-0872">Ion channel impairing toxin</keyword>
<keyword id="KW-0528">Neurotoxin</keyword>
<keyword id="KW-0964">Secreted</keyword>
<keyword id="KW-0800">Toxin</keyword>
<keyword id="KW-1218">Voltage-gated calcium channel impairing toxin</keyword>
<keyword id="KW-0738">Voltage-gated sodium channel impairing toxin</keyword>
<proteinExistence type="evidence at protein level"/>
<protein>
    <recommendedName>
        <fullName evidence="5">Kurtoxin-like II</fullName>
        <shortName evidence="5">KLII</shortName>
    </recommendedName>
    <alternativeName>
        <fullName evidence="6">Toxin PgKL2</fullName>
    </alternativeName>
</protein>
<organism>
    <name type="scientific">Parabuthus granulatus</name>
    <name type="common">Granulated thick-tailed scorpion</name>
    <name type="synonym">Androctonus granulatus</name>
    <dbReference type="NCBI Taxonomy" id="242110"/>
    <lineage>
        <taxon>Eukaryota</taxon>
        <taxon>Metazoa</taxon>
        <taxon>Ecdysozoa</taxon>
        <taxon>Arthropoda</taxon>
        <taxon>Chelicerata</taxon>
        <taxon>Arachnida</taxon>
        <taxon>Scorpiones</taxon>
        <taxon>Buthida</taxon>
        <taxon>Buthoidea</taxon>
        <taxon>Buthidae</taxon>
        <taxon>Parabuthus</taxon>
    </lineage>
</organism>
<evidence type="ECO:0000250" key="1">
    <source>
        <dbReference type="UniProtKB" id="P0C5F0"/>
    </source>
</evidence>
<evidence type="ECO:0000250" key="2">
    <source>
        <dbReference type="UniProtKB" id="P58910"/>
    </source>
</evidence>
<evidence type="ECO:0000255" key="3">
    <source>
        <dbReference type="PROSITE-ProRule" id="PRU01210"/>
    </source>
</evidence>
<evidence type="ECO:0000269" key="4">
    <source>
    </source>
</evidence>
<evidence type="ECO:0000303" key="5">
    <source>
    </source>
</evidence>
<evidence type="ECO:0000305" key="6"/>
<evidence type="ECO:0000305" key="7">
    <source>
    </source>
</evidence>
<comment type="function">
    <text evidence="1 2 4">This neurotoxin acts on sodium and calcium channels. Potently inhibits native voltage-gated T-type calcium channel activity in mouse male germ cells (PubMed:12459175). Also binds Cav3.1/CACNA1G, Cav3.2/CACNA1H, and Cav3.3/CACNA1I T-type calcium channels and inhibits the channels by modifying voltage-dependent gating (By similarity). In addition, binds and significantly inhibits the inactivation of activated sodium channels (Nav1.2/SCN2A and Nav1.5/SCN5A) (By similarity).</text>
</comment>
<comment type="subcellular location">
    <subcellularLocation>
        <location evidence="4">Secreted</location>
    </subcellularLocation>
</comment>
<comment type="tissue specificity">
    <text evidence="7">Expressed by the venom gland.</text>
</comment>
<comment type="domain">
    <text evidence="6">Has the structural arrangement of an alpha-helix connected to antiparallel beta-sheets by disulfide bonds (CS-alpha/beta).</text>
</comment>
<comment type="mass spectrometry" mass="7386.4" method="Electrospray" evidence="4"/>
<comment type="miscellaneous">
    <text evidence="6">The primary structure of the mature protein is identical to that of kurtoxin from Parabuthus transvaalicus (AC P58910).</text>
</comment>
<comment type="similarity">
    <text evidence="6">Belongs to the long (4 C-C) scorpion toxin superfamily. Sodium channel inhibitor family. Alpha subfamily.</text>
</comment>
<reference key="1">
    <citation type="journal article" date="2002" name="Biochem. Biophys. Res. Commun.">
        <title>Two new scorpion toxins that target voltage-gated Ca2+ and Na+ channels.</title>
        <authorList>
            <person name="Olamendi-Portugal T."/>
            <person name="Garcia B.I."/>
            <person name="Lopez-Gonzalez I."/>
            <person name="Van Der Walt J."/>
            <person name="Dyason K."/>
            <person name="Ulens C."/>
            <person name="Tytgat J."/>
            <person name="Felix R."/>
            <person name="Darszon A."/>
            <person name="Possani L.D."/>
        </authorList>
    </citation>
    <scope>PROTEIN SEQUENCE</scope>
    <scope>MASS SPECTROMETRY</scope>
    <scope>FUNCTION</scope>
    <scope>SUBCELLULAR LOCATION</scope>
    <source>
        <tissue>Venom</tissue>
    </source>
</reference>
<sequence length="63" mass="7394">KIDGYPVDYWNCKRICWYNNKYCNDLCKGLKADSGYCWGWTLSCYCQGLPDNARIKRSGRCRA</sequence>